<comment type="caution">
    <text evidence="1">Product of a dubious gene prediction.</text>
</comment>
<evidence type="ECO:0000305" key="1"/>
<name>Y9105_DICDI</name>
<feature type="chain" id="PRO_0000346903" description="Putative uncharacterized protein DDB_G0290819">
    <location>
        <begin position="1"/>
        <end position="41"/>
    </location>
</feature>
<gene>
    <name type="ORF">DDB_G0290819</name>
</gene>
<accession>Q54FI7</accession>
<reference key="1">
    <citation type="journal article" date="2005" name="Nature">
        <title>The genome of the social amoeba Dictyostelium discoideum.</title>
        <authorList>
            <person name="Eichinger L."/>
            <person name="Pachebat J.A."/>
            <person name="Gloeckner G."/>
            <person name="Rajandream M.A."/>
            <person name="Sucgang R."/>
            <person name="Berriman M."/>
            <person name="Song J."/>
            <person name="Olsen R."/>
            <person name="Szafranski K."/>
            <person name="Xu Q."/>
            <person name="Tunggal B."/>
            <person name="Kummerfeld S."/>
            <person name="Madera M."/>
            <person name="Konfortov B.A."/>
            <person name="Rivero F."/>
            <person name="Bankier A.T."/>
            <person name="Lehmann R."/>
            <person name="Hamlin N."/>
            <person name="Davies R."/>
            <person name="Gaudet P."/>
            <person name="Fey P."/>
            <person name="Pilcher K."/>
            <person name="Chen G."/>
            <person name="Saunders D."/>
            <person name="Sodergren E.J."/>
            <person name="Davis P."/>
            <person name="Kerhornou A."/>
            <person name="Nie X."/>
            <person name="Hall N."/>
            <person name="Anjard C."/>
            <person name="Hemphill L."/>
            <person name="Bason N."/>
            <person name="Farbrother P."/>
            <person name="Desany B."/>
            <person name="Just E."/>
            <person name="Morio T."/>
            <person name="Rost R."/>
            <person name="Churcher C.M."/>
            <person name="Cooper J."/>
            <person name="Haydock S."/>
            <person name="van Driessche N."/>
            <person name="Cronin A."/>
            <person name="Goodhead I."/>
            <person name="Muzny D.M."/>
            <person name="Mourier T."/>
            <person name="Pain A."/>
            <person name="Lu M."/>
            <person name="Harper D."/>
            <person name="Lindsay R."/>
            <person name="Hauser H."/>
            <person name="James K.D."/>
            <person name="Quiles M."/>
            <person name="Madan Babu M."/>
            <person name="Saito T."/>
            <person name="Buchrieser C."/>
            <person name="Wardroper A."/>
            <person name="Felder M."/>
            <person name="Thangavelu M."/>
            <person name="Johnson D."/>
            <person name="Knights A."/>
            <person name="Loulseged H."/>
            <person name="Mungall K.L."/>
            <person name="Oliver K."/>
            <person name="Price C."/>
            <person name="Quail M.A."/>
            <person name="Urushihara H."/>
            <person name="Hernandez J."/>
            <person name="Rabbinowitsch E."/>
            <person name="Steffen D."/>
            <person name="Sanders M."/>
            <person name="Ma J."/>
            <person name="Kohara Y."/>
            <person name="Sharp S."/>
            <person name="Simmonds M.N."/>
            <person name="Spiegler S."/>
            <person name="Tivey A."/>
            <person name="Sugano S."/>
            <person name="White B."/>
            <person name="Walker D."/>
            <person name="Woodward J.R."/>
            <person name="Winckler T."/>
            <person name="Tanaka Y."/>
            <person name="Shaulsky G."/>
            <person name="Schleicher M."/>
            <person name="Weinstock G.M."/>
            <person name="Rosenthal A."/>
            <person name="Cox E.C."/>
            <person name="Chisholm R.L."/>
            <person name="Gibbs R.A."/>
            <person name="Loomis W.F."/>
            <person name="Platzer M."/>
            <person name="Kay R.R."/>
            <person name="Williams J.G."/>
            <person name="Dear P.H."/>
            <person name="Noegel A.A."/>
            <person name="Barrell B.G."/>
            <person name="Kuspa A."/>
        </authorList>
    </citation>
    <scope>NUCLEOTIDE SEQUENCE [LARGE SCALE GENOMIC DNA]</scope>
    <source>
        <strain>AX4</strain>
    </source>
</reference>
<organism>
    <name type="scientific">Dictyostelium discoideum</name>
    <name type="common">Social amoeba</name>
    <dbReference type="NCBI Taxonomy" id="44689"/>
    <lineage>
        <taxon>Eukaryota</taxon>
        <taxon>Amoebozoa</taxon>
        <taxon>Evosea</taxon>
        <taxon>Eumycetozoa</taxon>
        <taxon>Dictyostelia</taxon>
        <taxon>Dictyosteliales</taxon>
        <taxon>Dictyosteliaceae</taxon>
        <taxon>Dictyostelium</taxon>
    </lineage>
</organism>
<protein>
    <recommendedName>
        <fullName>Putative uncharacterized protein DDB_G0290819</fullName>
    </recommendedName>
</protein>
<proteinExistence type="uncertain"/>
<sequence>MLDFKHFKLLYKEITGATTKTPKKEATLNTILENQEYSKNT</sequence>
<keyword id="KW-1185">Reference proteome</keyword>
<dbReference type="EMBL" id="AAFI02000171">
    <property type="protein sequence ID" value="EAL62043.1"/>
    <property type="molecule type" value="Genomic_DNA"/>
</dbReference>
<dbReference type="RefSeq" id="XP_635553.1">
    <property type="nucleotide sequence ID" value="XM_630461.1"/>
</dbReference>
<dbReference type="SMR" id="Q54FI7"/>
<dbReference type="PaxDb" id="44689-DDB0189105"/>
<dbReference type="EnsemblProtists" id="EAL62043">
    <property type="protein sequence ID" value="EAL62043"/>
    <property type="gene ID" value="DDB_G0290819"/>
</dbReference>
<dbReference type="GeneID" id="8627851"/>
<dbReference type="KEGG" id="ddi:DDB_G0290819"/>
<dbReference type="dictyBase" id="DDB_G0290819"/>
<dbReference type="VEuPathDB" id="AmoebaDB:DDB_G0290819"/>
<dbReference type="HOGENOM" id="CLU_3280654_0_0_1"/>
<dbReference type="InParanoid" id="Q54FI7"/>
<dbReference type="Proteomes" id="UP000002195">
    <property type="component" value="Chromosome 5"/>
</dbReference>